<comment type="function">
    <text evidence="1">Promotes the exchange of Ras-bound GDP by GTP.</text>
</comment>
<comment type="developmental stage">
    <text evidence="5">Expressed during development; especially between 8 and 12 hours of development.</text>
</comment>
<reference key="1">
    <citation type="journal article" date="2005" name="Genome Biol.">
        <title>The Dictyostelium genome encodes numerous RasGEFs with multiple biological roles.</title>
        <authorList>
            <person name="Wilkins A."/>
            <person name="Szafranski K."/>
            <person name="Fraser D.J."/>
            <person name="Bakthavatsalam D."/>
            <person name="Mueller R."/>
            <person name="Fisher P.R."/>
            <person name="Gloeckner G."/>
            <person name="Eichinger L."/>
            <person name="Noegel A.A."/>
            <person name="Insall R.H."/>
        </authorList>
    </citation>
    <scope>NUCLEOTIDE SEQUENCE [GENOMIC DNA]</scope>
    <scope>DEVELOPMENTAL STAGE</scope>
    <source>
        <strain>AX4</strain>
    </source>
</reference>
<reference key="2">
    <citation type="journal article" date="2005" name="Nature">
        <title>The genome of the social amoeba Dictyostelium discoideum.</title>
        <authorList>
            <person name="Eichinger L."/>
            <person name="Pachebat J.A."/>
            <person name="Gloeckner G."/>
            <person name="Rajandream M.A."/>
            <person name="Sucgang R."/>
            <person name="Berriman M."/>
            <person name="Song J."/>
            <person name="Olsen R."/>
            <person name="Szafranski K."/>
            <person name="Xu Q."/>
            <person name="Tunggal B."/>
            <person name="Kummerfeld S."/>
            <person name="Madera M."/>
            <person name="Konfortov B.A."/>
            <person name="Rivero F."/>
            <person name="Bankier A.T."/>
            <person name="Lehmann R."/>
            <person name="Hamlin N."/>
            <person name="Davies R."/>
            <person name="Gaudet P."/>
            <person name="Fey P."/>
            <person name="Pilcher K."/>
            <person name="Chen G."/>
            <person name="Saunders D."/>
            <person name="Sodergren E.J."/>
            <person name="Davis P."/>
            <person name="Kerhornou A."/>
            <person name="Nie X."/>
            <person name="Hall N."/>
            <person name="Anjard C."/>
            <person name="Hemphill L."/>
            <person name="Bason N."/>
            <person name="Farbrother P."/>
            <person name="Desany B."/>
            <person name="Just E."/>
            <person name="Morio T."/>
            <person name="Rost R."/>
            <person name="Churcher C.M."/>
            <person name="Cooper J."/>
            <person name="Haydock S."/>
            <person name="van Driessche N."/>
            <person name="Cronin A."/>
            <person name="Goodhead I."/>
            <person name="Muzny D.M."/>
            <person name="Mourier T."/>
            <person name="Pain A."/>
            <person name="Lu M."/>
            <person name="Harper D."/>
            <person name="Lindsay R."/>
            <person name="Hauser H."/>
            <person name="James K.D."/>
            <person name="Quiles M."/>
            <person name="Madan Babu M."/>
            <person name="Saito T."/>
            <person name="Buchrieser C."/>
            <person name="Wardroper A."/>
            <person name="Felder M."/>
            <person name="Thangavelu M."/>
            <person name="Johnson D."/>
            <person name="Knights A."/>
            <person name="Loulseged H."/>
            <person name="Mungall K.L."/>
            <person name="Oliver K."/>
            <person name="Price C."/>
            <person name="Quail M.A."/>
            <person name="Urushihara H."/>
            <person name="Hernandez J."/>
            <person name="Rabbinowitsch E."/>
            <person name="Steffen D."/>
            <person name="Sanders M."/>
            <person name="Ma J."/>
            <person name="Kohara Y."/>
            <person name="Sharp S."/>
            <person name="Simmonds M.N."/>
            <person name="Spiegler S."/>
            <person name="Tivey A."/>
            <person name="Sugano S."/>
            <person name="White B."/>
            <person name="Walker D."/>
            <person name="Woodward J.R."/>
            <person name="Winckler T."/>
            <person name="Tanaka Y."/>
            <person name="Shaulsky G."/>
            <person name="Schleicher M."/>
            <person name="Weinstock G.M."/>
            <person name="Rosenthal A."/>
            <person name="Cox E.C."/>
            <person name="Chisholm R.L."/>
            <person name="Gibbs R.A."/>
            <person name="Loomis W.F."/>
            <person name="Platzer M."/>
            <person name="Kay R.R."/>
            <person name="Williams J.G."/>
            <person name="Dear P.H."/>
            <person name="Noegel A.A."/>
            <person name="Barrell B.G."/>
            <person name="Kuspa A."/>
        </authorList>
    </citation>
    <scope>NUCLEOTIDE SEQUENCE [LARGE SCALE GENOMIC DNA]</scope>
    <source>
        <strain>AX4</strain>
    </source>
</reference>
<gene>
    <name type="primary">gefD</name>
    <name type="synonym">RasGEFD</name>
    <name type="ORF">DDB_G0289667</name>
</gene>
<dbReference type="EMBL" id="AY160093">
    <property type="protein sequence ID" value="AAN46873.1"/>
    <property type="molecule type" value="Genomic_DNA"/>
</dbReference>
<dbReference type="EMBL" id="AAFI02000148">
    <property type="protein sequence ID" value="EAL62545.1"/>
    <property type="molecule type" value="Genomic_DNA"/>
</dbReference>
<dbReference type="RefSeq" id="XP_636070.1">
    <property type="nucleotide sequence ID" value="XM_630978.1"/>
</dbReference>
<dbReference type="SMR" id="Q8IS19"/>
<dbReference type="FunCoup" id="Q8IS19">
    <property type="interactions" value="14"/>
</dbReference>
<dbReference type="STRING" id="44689.Q8IS19"/>
<dbReference type="PaxDb" id="44689-DDB0201637"/>
<dbReference type="EnsemblProtists" id="EAL62545">
    <property type="protein sequence ID" value="EAL62545"/>
    <property type="gene ID" value="DDB_G0289667"/>
</dbReference>
<dbReference type="GeneID" id="8627280"/>
<dbReference type="KEGG" id="ddi:DDB_G0289667"/>
<dbReference type="dictyBase" id="DDB_G0289667">
    <property type="gene designation" value="gefD"/>
</dbReference>
<dbReference type="VEuPathDB" id="AmoebaDB:DDB_G0289667"/>
<dbReference type="eggNOG" id="KOG3417">
    <property type="taxonomic scope" value="Eukaryota"/>
</dbReference>
<dbReference type="HOGENOM" id="CLU_411313_0_0_1"/>
<dbReference type="InParanoid" id="Q8IS19"/>
<dbReference type="OMA" id="INTEKFR"/>
<dbReference type="PhylomeDB" id="Q8IS19"/>
<dbReference type="Reactome" id="R-DDI-193648">
    <property type="pathway name" value="NRAGE signals death through JNK"/>
</dbReference>
<dbReference type="Reactome" id="R-DDI-9013148">
    <property type="pathway name" value="CDC42 GTPase cycle"/>
</dbReference>
<dbReference type="Reactome" id="R-DDI-9013149">
    <property type="pathway name" value="RAC1 GTPase cycle"/>
</dbReference>
<dbReference type="PRO" id="PR:Q8IS19"/>
<dbReference type="Proteomes" id="UP000002195">
    <property type="component" value="Chromosome 5"/>
</dbReference>
<dbReference type="GO" id="GO:0005886">
    <property type="term" value="C:plasma membrane"/>
    <property type="evidence" value="ECO:0000318"/>
    <property type="project" value="GO_Central"/>
</dbReference>
<dbReference type="GO" id="GO:0005096">
    <property type="term" value="F:GTPase activator activity"/>
    <property type="evidence" value="ECO:0007669"/>
    <property type="project" value="UniProtKB-KW"/>
</dbReference>
<dbReference type="GO" id="GO:0005085">
    <property type="term" value="F:guanyl-nucleotide exchange factor activity"/>
    <property type="evidence" value="ECO:0000318"/>
    <property type="project" value="GO_Central"/>
</dbReference>
<dbReference type="GO" id="GO:0007265">
    <property type="term" value="P:Ras protein signal transduction"/>
    <property type="evidence" value="ECO:0000318"/>
    <property type="project" value="GO_Central"/>
</dbReference>
<dbReference type="GO" id="GO:1903013">
    <property type="term" value="P:response to differentiation-inducing factor 1"/>
    <property type="evidence" value="ECO:0007005"/>
    <property type="project" value="dictyBase"/>
</dbReference>
<dbReference type="CDD" id="cd00155">
    <property type="entry name" value="RasGEF"/>
    <property type="match status" value="1"/>
</dbReference>
<dbReference type="CDD" id="cd06224">
    <property type="entry name" value="REM"/>
    <property type="match status" value="1"/>
</dbReference>
<dbReference type="FunFam" id="1.20.870.10:FF:000038">
    <property type="entry name" value="Ras guanine nucleotide exchange factor D"/>
    <property type="match status" value="1"/>
</dbReference>
<dbReference type="Gene3D" id="1.10.840.10">
    <property type="entry name" value="Ras guanine-nucleotide exchange factors catalytic domain"/>
    <property type="match status" value="1"/>
</dbReference>
<dbReference type="Gene3D" id="1.10.555.10">
    <property type="entry name" value="Rho GTPase activation protein"/>
    <property type="match status" value="1"/>
</dbReference>
<dbReference type="Gene3D" id="1.20.870.10">
    <property type="entry name" value="Son of sevenless (SoS) protein Chain: S domain 1"/>
    <property type="match status" value="1"/>
</dbReference>
<dbReference type="InterPro" id="IPR008937">
    <property type="entry name" value="Ras-like_GEF"/>
</dbReference>
<dbReference type="InterPro" id="IPR000651">
    <property type="entry name" value="Ras-like_Gua-exchang_fac_N"/>
</dbReference>
<dbReference type="InterPro" id="IPR023578">
    <property type="entry name" value="Ras_GEF_dom_sf"/>
</dbReference>
<dbReference type="InterPro" id="IPR001895">
    <property type="entry name" value="RASGEF_cat_dom"/>
</dbReference>
<dbReference type="InterPro" id="IPR036964">
    <property type="entry name" value="RASGEF_cat_dom_sf"/>
</dbReference>
<dbReference type="InterPro" id="IPR008936">
    <property type="entry name" value="Rho_GTPase_activation_prot"/>
</dbReference>
<dbReference type="InterPro" id="IPR000198">
    <property type="entry name" value="RhoGAP_dom"/>
</dbReference>
<dbReference type="PANTHER" id="PTHR23113">
    <property type="entry name" value="GUANINE NUCLEOTIDE EXCHANGE FACTOR"/>
    <property type="match status" value="1"/>
</dbReference>
<dbReference type="PANTHER" id="PTHR23113:SF364">
    <property type="entry name" value="RAS GUANINE NUCLEOTIDE EXCHANGE FACTOR D"/>
    <property type="match status" value="1"/>
</dbReference>
<dbReference type="Pfam" id="PF00617">
    <property type="entry name" value="RasGEF"/>
    <property type="match status" value="1"/>
</dbReference>
<dbReference type="Pfam" id="PF00618">
    <property type="entry name" value="RasGEF_N"/>
    <property type="match status" value="1"/>
</dbReference>
<dbReference type="Pfam" id="PF00620">
    <property type="entry name" value="RhoGAP"/>
    <property type="match status" value="1"/>
</dbReference>
<dbReference type="SMART" id="SM00147">
    <property type="entry name" value="RasGEF"/>
    <property type="match status" value="1"/>
</dbReference>
<dbReference type="SMART" id="SM00229">
    <property type="entry name" value="RasGEFN"/>
    <property type="match status" value="1"/>
</dbReference>
<dbReference type="SMART" id="SM00324">
    <property type="entry name" value="RhoGAP"/>
    <property type="match status" value="1"/>
</dbReference>
<dbReference type="SUPFAM" id="SSF48350">
    <property type="entry name" value="GTPase activation domain, GAP"/>
    <property type="match status" value="1"/>
</dbReference>
<dbReference type="SUPFAM" id="SSF48366">
    <property type="entry name" value="Ras GEF"/>
    <property type="match status" value="1"/>
</dbReference>
<dbReference type="PROSITE" id="PS50009">
    <property type="entry name" value="RASGEF_CAT"/>
    <property type="match status" value="1"/>
</dbReference>
<dbReference type="PROSITE" id="PS50212">
    <property type="entry name" value="RASGEF_NTER"/>
    <property type="match status" value="1"/>
</dbReference>
<dbReference type="PROSITE" id="PS50238">
    <property type="entry name" value="RHOGAP"/>
    <property type="match status" value="1"/>
</dbReference>
<evidence type="ECO:0000250" key="1"/>
<evidence type="ECO:0000255" key="2">
    <source>
        <dbReference type="PROSITE-ProRule" id="PRU00135"/>
    </source>
</evidence>
<evidence type="ECO:0000255" key="3">
    <source>
        <dbReference type="PROSITE-ProRule" id="PRU00168"/>
    </source>
</evidence>
<evidence type="ECO:0000255" key="4">
    <source>
        <dbReference type="PROSITE-ProRule" id="PRU00172"/>
    </source>
</evidence>
<evidence type="ECO:0000269" key="5">
    <source>
    </source>
</evidence>
<proteinExistence type="evidence at transcript level"/>
<organism>
    <name type="scientific">Dictyostelium discoideum</name>
    <name type="common">Social amoeba</name>
    <dbReference type="NCBI Taxonomy" id="44689"/>
    <lineage>
        <taxon>Eukaryota</taxon>
        <taxon>Amoebozoa</taxon>
        <taxon>Evosea</taxon>
        <taxon>Eumycetozoa</taxon>
        <taxon>Dictyostelia</taxon>
        <taxon>Dictyosteliales</taxon>
        <taxon>Dictyosteliaceae</taxon>
        <taxon>Dictyostelium</taxon>
    </lineage>
</organism>
<name>GEFD_DICDI</name>
<feature type="chain" id="PRO_0000384462" description="Ras guanine nucleotide exchange factor D">
    <location>
        <begin position="1"/>
        <end position="668"/>
    </location>
</feature>
<feature type="domain" description="Rho-GAP" evidence="4">
    <location>
        <begin position="27"/>
        <end position="224"/>
    </location>
</feature>
<feature type="domain" description="N-terminal Ras-GEF" evidence="2">
    <location>
        <begin position="237"/>
        <end position="362"/>
    </location>
</feature>
<feature type="domain" description="Ras-GEF" evidence="3">
    <location>
        <begin position="433"/>
        <end position="663"/>
    </location>
</feature>
<feature type="site" description="Arginine finger; crucial for GTP hydrolysis by stabilizing the transition state" evidence="4">
    <location>
        <position position="67"/>
    </location>
</feature>
<sequence>MGNSKQIKRSLTGSILLKKQISQIFFKKLESIFGIALAEDTSDRLMDYLNKSIDYLLDHSVIEGLFSIEIEESKLKSTIESIESTLITDFSLTTDPCYVASTFILYFSKLPNLLLSKISSQLIHSVEISHEEYRINVIRSLLYSLPLQNRNILKMVLHFLKKFSLACNNNNNNNSENNNTIVEDIEVQSAYNRFTKAFMSTTPGNFEISCKAIRLMVMDIDEFDKLPQDIQYMVKDGESIVKAATFDRLVEKLFDLSYGFKDPDYNYTVFHTYDYYTTSVELLGKIVHYYRIACTLTTKLQMEVSITILSVAMFWMKIHHNHLMTDLQFLQKLKIFLDSVPQVPPTQVTYFTYFQTFFKPVIEPLKPLYERGNSFLGPNLTQSSGTSKKKNQLIEKMMINNNINNNNNINNNVNSNSNNNFNNNIDIDIYNIGSNIIAQQITIIDNEMLMAIPPSQFLHKSFSKESKSPQFHDMVSKFNEWARWTSSEILSKEKLVERVVTLSFFIDLAKSCVELGNYNAANAIVGGLNHSSISRLKLTWERLSTKVTQDYDRLLSLFDLSMNYKNYRDEIKSTKAKIIPYLGLFPKDLIAIEEGNDNFTNNNLINTEKFRLLYQTIKKIQSYQQPLFTFKTSEPIKQYLKNISNGLSEEKDFHSISHKLEPRQQQTQ</sequence>
<accession>Q8IS19</accession>
<accession>Q54H48</accession>
<protein>
    <recommendedName>
        <fullName>Ras guanine nucleotide exchange factor D</fullName>
    </recommendedName>
    <alternativeName>
        <fullName>RhoGAP domain-containing protein D</fullName>
    </alternativeName>
</protein>
<keyword id="KW-0343">GTPase activation</keyword>
<keyword id="KW-0344">Guanine-nucleotide releasing factor</keyword>
<keyword id="KW-1185">Reference proteome</keyword>